<gene>
    <name type="primary">TUBB5</name>
    <name type="synonym">OSTB-50</name>
    <name type="synonym">R2242</name>
    <name type="synonym">TUB5</name>
    <name type="ordered locus">Os02g0167300</name>
    <name type="ordered locus">LOC_Os02g07060</name>
    <name evidence="7" type="ORF">OsJ_05524</name>
    <name type="ORF">OSJNBa0085K21.33</name>
</gene>
<dbReference type="EMBL" id="D30717">
    <property type="protein sequence ID" value="BAA06382.1"/>
    <property type="molecule type" value="mRNA"/>
</dbReference>
<dbReference type="EMBL" id="X79367">
    <property type="protein sequence ID" value="CAA55912.1"/>
    <property type="molecule type" value="mRNA"/>
</dbReference>
<dbReference type="EMBL" id="AP005804">
    <property type="protein sequence ID" value="BAD26239.1"/>
    <property type="molecule type" value="Genomic_DNA"/>
</dbReference>
<dbReference type="EMBL" id="AP008208">
    <property type="protein sequence ID" value="BAF07920.1"/>
    <property type="molecule type" value="Genomic_DNA"/>
</dbReference>
<dbReference type="EMBL" id="AP014958">
    <property type="protein sequence ID" value="BAS77161.1"/>
    <property type="molecule type" value="Genomic_DNA"/>
</dbReference>
<dbReference type="EMBL" id="CM000139">
    <property type="protein sequence ID" value="EAZ21874.1"/>
    <property type="molecule type" value="Genomic_DNA"/>
</dbReference>
<dbReference type="EMBL" id="AK121574">
    <property type="protein sequence ID" value="BAH00558.1"/>
    <property type="molecule type" value="mRNA"/>
</dbReference>
<dbReference type="PIR" id="S45040">
    <property type="entry name" value="S45040"/>
</dbReference>
<dbReference type="RefSeq" id="XP_015625553.1">
    <property type="nucleotide sequence ID" value="XM_015770067.1"/>
</dbReference>
<dbReference type="SMR" id="P46265"/>
<dbReference type="BioGRID" id="797457">
    <property type="interactions" value="1"/>
</dbReference>
<dbReference type="FunCoup" id="P46265">
    <property type="interactions" value="1758"/>
</dbReference>
<dbReference type="STRING" id="39947.P46265"/>
<dbReference type="PaxDb" id="39947-P46265"/>
<dbReference type="EnsemblPlants" id="Os02t0167300-01">
    <property type="protein sequence ID" value="Os02t0167300-01"/>
    <property type="gene ID" value="Os02g0167300"/>
</dbReference>
<dbReference type="Gramene" id="Os02t0167300-01">
    <property type="protein sequence ID" value="Os02t0167300-01"/>
    <property type="gene ID" value="Os02g0167300"/>
</dbReference>
<dbReference type="KEGG" id="dosa:Os02g0167300"/>
<dbReference type="eggNOG" id="KOG1375">
    <property type="taxonomic scope" value="Eukaryota"/>
</dbReference>
<dbReference type="HOGENOM" id="CLU_015718_1_1_1"/>
<dbReference type="InParanoid" id="P46265"/>
<dbReference type="OMA" id="DQMRSIQ"/>
<dbReference type="OrthoDB" id="732292at2759"/>
<dbReference type="Proteomes" id="UP000000763">
    <property type="component" value="Chromosome 2"/>
</dbReference>
<dbReference type="Proteomes" id="UP000007752">
    <property type="component" value="Chromosome 2"/>
</dbReference>
<dbReference type="Proteomes" id="UP000059680">
    <property type="component" value="Chromosome 2"/>
</dbReference>
<dbReference type="ExpressionAtlas" id="P46265">
    <property type="expression patterns" value="baseline and differential"/>
</dbReference>
<dbReference type="GO" id="GO:0005737">
    <property type="term" value="C:cytoplasm"/>
    <property type="evidence" value="ECO:0000318"/>
    <property type="project" value="GO_Central"/>
</dbReference>
<dbReference type="GO" id="GO:0005874">
    <property type="term" value="C:microtubule"/>
    <property type="evidence" value="ECO:0000318"/>
    <property type="project" value="GO_Central"/>
</dbReference>
<dbReference type="GO" id="GO:0005525">
    <property type="term" value="F:GTP binding"/>
    <property type="evidence" value="ECO:0000318"/>
    <property type="project" value="GO_Central"/>
</dbReference>
<dbReference type="GO" id="GO:0003924">
    <property type="term" value="F:GTPase activity"/>
    <property type="evidence" value="ECO:0007669"/>
    <property type="project" value="InterPro"/>
</dbReference>
<dbReference type="GO" id="GO:0046872">
    <property type="term" value="F:metal ion binding"/>
    <property type="evidence" value="ECO:0007669"/>
    <property type="project" value="UniProtKB-KW"/>
</dbReference>
<dbReference type="GO" id="GO:0005200">
    <property type="term" value="F:structural constituent of cytoskeleton"/>
    <property type="evidence" value="ECO:0000318"/>
    <property type="project" value="GO_Central"/>
</dbReference>
<dbReference type="GO" id="GO:0000226">
    <property type="term" value="P:microtubule cytoskeleton organization"/>
    <property type="evidence" value="ECO:0000318"/>
    <property type="project" value="GO_Central"/>
</dbReference>
<dbReference type="GO" id="GO:0000278">
    <property type="term" value="P:mitotic cell cycle"/>
    <property type="evidence" value="ECO:0000318"/>
    <property type="project" value="GO_Central"/>
</dbReference>
<dbReference type="CDD" id="cd02187">
    <property type="entry name" value="beta_tubulin"/>
    <property type="match status" value="1"/>
</dbReference>
<dbReference type="FunFam" id="1.10.287.600:FF:000002">
    <property type="entry name" value="Tubulin beta chain"/>
    <property type="match status" value="1"/>
</dbReference>
<dbReference type="FunFam" id="3.30.1330.20:FF:000002">
    <property type="entry name" value="Tubulin beta chain"/>
    <property type="match status" value="1"/>
</dbReference>
<dbReference type="FunFam" id="3.40.50.1440:FF:000005">
    <property type="entry name" value="Tubulin beta chain"/>
    <property type="match status" value="1"/>
</dbReference>
<dbReference type="Gene3D" id="1.10.287.600">
    <property type="entry name" value="Helix hairpin bin"/>
    <property type="match status" value="1"/>
</dbReference>
<dbReference type="Gene3D" id="3.30.1330.20">
    <property type="entry name" value="Tubulin/FtsZ, C-terminal domain"/>
    <property type="match status" value="1"/>
</dbReference>
<dbReference type="Gene3D" id="3.40.50.1440">
    <property type="entry name" value="Tubulin/FtsZ, GTPase domain"/>
    <property type="match status" value="1"/>
</dbReference>
<dbReference type="InterPro" id="IPR013838">
    <property type="entry name" value="Beta-tubulin_BS"/>
</dbReference>
<dbReference type="InterPro" id="IPR002453">
    <property type="entry name" value="Beta_tubulin"/>
</dbReference>
<dbReference type="InterPro" id="IPR008280">
    <property type="entry name" value="Tub_FtsZ_C"/>
</dbReference>
<dbReference type="InterPro" id="IPR000217">
    <property type="entry name" value="Tubulin"/>
</dbReference>
<dbReference type="InterPro" id="IPR037103">
    <property type="entry name" value="Tubulin/FtsZ-like_C"/>
</dbReference>
<dbReference type="InterPro" id="IPR018316">
    <property type="entry name" value="Tubulin/FtsZ_2-layer-sand-dom"/>
</dbReference>
<dbReference type="InterPro" id="IPR036525">
    <property type="entry name" value="Tubulin/FtsZ_GTPase_sf"/>
</dbReference>
<dbReference type="InterPro" id="IPR023123">
    <property type="entry name" value="Tubulin_C"/>
</dbReference>
<dbReference type="InterPro" id="IPR017975">
    <property type="entry name" value="Tubulin_CS"/>
</dbReference>
<dbReference type="InterPro" id="IPR003008">
    <property type="entry name" value="Tubulin_FtsZ_GTPase"/>
</dbReference>
<dbReference type="PANTHER" id="PTHR11588">
    <property type="entry name" value="TUBULIN"/>
    <property type="match status" value="1"/>
</dbReference>
<dbReference type="Pfam" id="PF00091">
    <property type="entry name" value="Tubulin"/>
    <property type="match status" value="1"/>
</dbReference>
<dbReference type="Pfam" id="PF03953">
    <property type="entry name" value="Tubulin_C"/>
    <property type="match status" value="1"/>
</dbReference>
<dbReference type="PRINTS" id="PR01163">
    <property type="entry name" value="BETATUBULIN"/>
</dbReference>
<dbReference type="PRINTS" id="PR01161">
    <property type="entry name" value="TUBULIN"/>
</dbReference>
<dbReference type="SMART" id="SM00864">
    <property type="entry name" value="Tubulin"/>
    <property type="match status" value="1"/>
</dbReference>
<dbReference type="SMART" id="SM00865">
    <property type="entry name" value="Tubulin_C"/>
    <property type="match status" value="1"/>
</dbReference>
<dbReference type="SUPFAM" id="SSF55307">
    <property type="entry name" value="Tubulin C-terminal domain-like"/>
    <property type="match status" value="1"/>
</dbReference>
<dbReference type="SUPFAM" id="SSF52490">
    <property type="entry name" value="Tubulin nucleotide-binding domain-like"/>
    <property type="match status" value="1"/>
</dbReference>
<dbReference type="PROSITE" id="PS00227">
    <property type="entry name" value="TUBULIN"/>
    <property type="match status" value="1"/>
</dbReference>
<dbReference type="PROSITE" id="PS00228">
    <property type="entry name" value="TUBULIN_B_AUTOREG"/>
    <property type="match status" value="1"/>
</dbReference>
<sequence length="447" mass="50105">MREILHIQGGQCGNQIGAKFWEVICDEHGIDHTGKYSGDSDLQLERINVYYNEASGGRFVPRAVLMDLEPGTMDSVRSGPFGQIFRPDNFVFGQSGAGNNWAKGHYTEGAELIDSVLDVVRKEAENCDCLQGFQVCHSLGGGTGSGMGTLLISKIREEYPDRMMLTFSVFPSPKVSDTVVEPYNATLSVHQLVENADECMVLDNEALYDICFRTLKLATPTFGDLNHLISATMSGVTCCLRFPGQLNSDLRKLAVNLIPFPRLHFFMVGFAPLTSRGSQQYRALTVPELTQQMWDAKNMMCAADPRHGRYLTASAMFRGKMSTKEVDEQMLNVQNKNSSYFVEWIPNNVKSSVCDIPPNGLKMASTFIGNSTSIQEMFRRVSEQFTAMFRRKAFLHWYTGEGMDEMEFTEAESNMNDLVAEYQQYQDATADDEEEDYGDEEEDEVAA</sequence>
<protein>
    <recommendedName>
        <fullName>Tubulin beta-5 chain</fullName>
    </recommendedName>
    <alternativeName>
        <fullName>Beta-5-tubulin</fullName>
    </alternativeName>
</protein>
<keyword id="KW-0963">Cytoplasm</keyword>
<keyword id="KW-0206">Cytoskeleton</keyword>
<keyword id="KW-0903">Direct protein sequencing</keyword>
<keyword id="KW-0342">GTP-binding</keyword>
<keyword id="KW-0460">Magnesium</keyword>
<keyword id="KW-0479">Metal-binding</keyword>
<keyword id="KW-0493">Microtubule</keyword>
<keyword id="KW-0547">Nucleotide-binding</keyword>
<keyword id="KW-1185">Reference proteome</keyword>
<organism>
    <name type="scientific">Oryza sativa subsp. japonica</name>
    <name type="common">Rice</name>
    <dbReference type="NCBI Taxonomy" id="39947"/>
    <lineage>
        <taxon>Eukaryota</taxon>
        <taxon>Viridiplantae</taxon>
        <taxon>Streptophyta</taxon>
        <taxon>Embryophyta</taxon>
        <taxon>Tracheophyta</taxon>
        <taxon>Spermatophyta</taxon>
        <taxon>Magnoliopsida</taxon>
        <taxon>Liliopsida</taxon>
        <taxon>Poales</taxon>
        <taxon>Poaceae</taxon>
        <taxon>BOP clade</taxon>
        <taxon>Oryzoideae</taxon>
        <taxon>Oryzeae</taxon>
        <taxon>Oryzinae</taxon>
        <taxon>Oryza</taxon>
        <taxon>Oryza sativa</taxon>
    </lineage>
</organism>
<name>TBB5_ORYSJ</name>
<feature type="chain" id="PRO_0000048367" description="Tubulin beta-5 chain">
    <location>
        <begin position="1"/>
        <end position="447"/>
    </location>
</feature>
<feature type="region of interest" description="Disordered" evidence="3">
    <location>
        <begin position="421"/>
        <end position="447"/>
    </location>
</feature>
<feature type="compositionally biased region" description="Acidic residues" evidence="3">
    <location>
        <begin position="429"/>
        <end position="447"/>
    </location>
</feature>
<feature type="binding site" evidence="2">
    <location>
        <position position="11"/>
    </location>
    <ligand>
        <name>GTP</name>
        <dbReference type="ChEBI" id="CHEBI:37565"/>
    </ligand>
</feature>
<feature type="binding site" evidence="1">
    <location>
        <position position="69"/>
    </location>
    <ligand>
        <name>GTP</name>
        <dbReference type="ChEBI" id="CHEBI:37565"/>
    </ligand>
</feature>
<feature type="binding site" evidence="1">
    <location>
        <position position="69"/>
    </location>
    <ligand>
        <name>Mg(2+)</name>
        <dbReference type="ChEBI" id="CHEBI:18420"/>
    </ligand>
</feature>
<feature type="binding site" evidence="2">
    <location>
        <position position="138"/>
    </location>
    <ligand>
        <name>GTP</name>
        <dbReference type="ChEBI" id="CHEBI:37565"/>
    </ligand>
</feature>
<feature type="binding site" evidence="2">
    <location>
        <position position="142"/>
    </location>
    <ligand>
        <name>GTP</name>
        <dbReference type="ChEBI" id="CHEBI:37565"/>
    </ligand>
</feature>
<feature type="binding site" evidence="2">
    <location>
        <position position="143"/>
    </location>
    <ligand>
        <name>GTP</name>
        <dbReference type="ChEBI" id="CHEBI:37565"/>
    </ligand>
</feature>
<feature type="binding site" evidence="2">
    <location>
        <position position="144"/>
    </location>
    <ligand>
        <name>GTP</name>
        <dbReference type="ChEBI" id="CHEBI:37565"/>
    </ligand>
</feature>
<feature type="binding site" evidence="2">
    <location>
        <position position="204"/>
    </location>
    <ligand>
        <name>GTP</name>
        <dbReference type="ChEBI" id="CHEBI:37565"/>
    </ligand>
</feature>
<feature type="binding site" evidence="2">
    <location>
        <position position="226"/>
    </location>
    <ligand>
        <name>GTP</name>
        <dbReference type="ChEBI" id="CHEBI:37565"/>
    </ligand>
</feature>
<feature type="sequence conflict" description="In Ref. 2; CAA55912." evidence="6" ref="2">
    <original>K</original>
    <variation>M</variation>
    <location>
        <position position="154"/>
    </location>
</feature>
<evidence type="ECO:0000250" key="1">
    <source>
        <dbReference type="UniProtKB" id="P68363"/>
    </source>
</evidence>
<evidence type="ECO:0000250" key="2">
    <source>
        <dbReference type="UniProtKB" id="Q13509"/>
    </source>
</evidence>
<evidence type="ECO:0000256" key="3">
    <source>
        <dbReference type="SAM" id="MobiDB-lite"/>
    </source>
</evidence>
<evidence type="ECO:0000269" key="4">
    <source>
    </source>
</evidence>
<evidence type="ECO:0000269" key="5">
    <source>
    </source>
</evidence>
<evidence type="ECO:0000305" key="6"/>
<evidence type="ECO:0000312" key="7">
    <source>
        <dbReference type="EMBL" id="EAZ21874.1"/>
    </source>
</evidence>
<comment type="function">
    <text>Tubulin is the major constituent of microtubules, a cylinder consisting of laterally associated linear protofilaments composed of alpha- and beta-tubulin heterodimers. Microtubules grow by the addition of GTP-tubulin dimers to the microtubule end, where a stabilizing cap forms. Below the cap, tubulin dimers are in GDP-bound state, owing to GTPase activity of alpha-tubulin.</text>
</comment>
<comment type="cofactor">
    <cofactor evidence="1">
        <name>Mg(2+)</name>
        <dbReference type="ChEBI" id="CHEBI:18420"/>
    </cofactor>
</comment>
<comment type="subunit">
    <text>Dimer of alpha and beta chains. A typical microtubule is a hollow water-filled tube with an outer diameter of 25 nm and an inner diameter of 15 nM. Alpha-beta heterodimers associate head-to-tail to form protofilaments running lengthwise along the microtubule wall with the beta-tubulin subunit facing the microtubule plus end conferring a structural polarity. Microtubules usually have 13 protofilaments but different protofilament numbers can be found in some organisms and specialized cells.</text>
</comment>
<comment type="subcellular location">
    <subcellularLocation>
        <location>Cytoplasm</location>
        <location>Cytoskeleton</location>
    </subcellularLocation>
</comment>
<comment type="tissue specificity">
    <text evidence="4">Expressed in roots, leaf sheaths, and suspension cultured cells.</text>
</comment>
<comment type="induction">
    <text evidence="4 5">By gibberellin and brassinolide. Down-regulated by abscisic acid (ABA).</text>
</comment>
<comment type="similarity">
    <text evidence="6">Belongs to the tubulin family.</text>
</comment>
<accession>P46265</accession>
<accession>Q0E3L8</accession>
<accession>Q6H4W0</accession>
<proteinExistence type="evidence at protein level"/>
<reference key="1">
    <citation type="journal article" date="1995" name="DNA Res.">
        <title>cDNA sequences of three kinds of beta-tubulins from rice.</title>
        <authorList>
            <person name="Koga-Ban Y."/>
            <person name="Niki T."/>
            <person name="Nagamura Y."/>
            <person name="Sasaki T."/>
            <person name="Minobe Y."/>
        </authorList>
    </citation>
    <scope>NUCLEOTIDE SEQUENCE [MRNA]</scope>
    <scope>INDUCTION</scope>
    <source>
        <strain>cv. Nipponbare</strain>
        <tissue>Root</tissue>
    </source>
</reference>
<reference key="2">
    <citation type="journal article" date="1995" name="Plant Physiol.">
        <title>Three rice cDNA clones encoding different beta-tubulin isotypes.</title>
        <authorList>
            <person name="Breviario D."/>
            <person name="Giani S."/>
            <person name="Meoni C."/>
        </authorList>
    </citation>
    <scope>NUCLEOTIDE SEQUENCE [MRNA]</scope>
    <source>
        <strain>cv. Arborio</strain>
        <tissue>Coleoptile</tissue>
    </source>
</reference>
<reference key="3">
    <citation type="journal article" date="2005" name="Nature">
        <title>The map-based sequence of the rice genome.</title>
        <authorList>
            <consortium name="International rice genome sequencing project (IRGSP)"/>
        </authorList>
    </citation>
    <scope>NUCLEOTIDE SEQUENCE [LARGE SCALE GENOMIC DNA]</scope>
    <source>
        <strain>cv. Nipponbare</strain>
    </source>
</reference>
<reference key="4">
    <citation type="journal article" date="2008" name="Nucleic Acids Res.">
        <title>The rice annotation project database (RAP-DB): 2008 update.</title>
        <authorList>
            <consortium name="The rice annotation project (RAP)"/>
        </authorList>
    </citation>
    <scope>GENOME REANNOTATION</scope>
    <source>
        <strain>cv. Nipponbare</strain>
    </source>
</reference>
<reference key="5">
    <citation type="journal article" date="2013" name="Rice">
        <title>Improvement of the Oryza sativa Nipponbare reference genome using next generation sequence and optical map data.</title>
        <authorList>
            <person name="Kawahara Y."/>
            <person name="de la Bastide M."/>
            <person name="Hamilton J.P."/>
            <person name="Kanamori H."/>
            <person name="McCombie W.R."/>
            <person name="Ouyang S."/>
            <person name="Schwartz D.C."/>
            <person name="Tanaka T."/>
            <person name="Wu J."/>
            <person name="Zhou S."/>
            <person name="Childs K.L."/>
            <person name="Davidson R.M."/>
            <person name="Lin H."/>
            <person name="Quesada-Ocampo L."/>
            <person name="Vaillancourt B."/>
            <person name="Sakai H."/>
            <person name="Lee S.S."/>
            <person name="Kim J."/>
            <person name="Numa H."/>
            <person name="Itoh T."/>
            <person name="Buell C.R."/>
            <person name="Matsumoto T."/>
        </authorList>
    </citation>
    <scope>GENOME REANNOTATION</scope>
    <source>
        <strain>cv. Nipponbare</strain>
    </source>
</reference>
<reference key="6">
    <citation type="journal article" date="2005" name="PLoS Biol.">
        <title>The genomes of Oryza sativa: a history of duplications.</title>
        <authorList>
            <person name="Yu J."/>
            <person name="Wang J."/>
            <person name="Lin W."/>
            <person name="Li S."/>
            <person name="Li H."/>
            <person name="Zhou J."/>
            <person name="Ni P."/>
            <person name="Dong W."/>
            <person name="Hu S."/>
            <person name="Zeng C."/>
            <person name="Zhang J."/>
            <person name="Zhang Y."/>
            <person name="Li R."/>
            <person name="Xu Z."/>
            <person name="Li S."/>
            <person name="Li X."/>
            <person name="Zheng H."/>
            <person name="Cong L."/>
            <person name="Lin L."/>
            <person name="Yin J."/>
            <person name="Geng J."/>
            <person name="Li G."/>
            <person name="Shi J."/>
            <person name="Liu J."/>
            <person name="Lv H."/>
            <person name="Li J."/>
            <person name="Wang J."/>
            <person name="Deng Y."/>
            <person name="Ran L."/>
            <person name="Shi X."/>
            <person name="Wang X."/>
            <person name="Wu Q."/>
            <person name="Li C."/>
            <person name="Ren X."/>
            <person name="Wang J."/>
            <person name="Wang X."/>
            <person name="Li D."/>
            <person name="Liu D."/>
            <person name="Zhang X."/>
            <person name="Ji Z."/>
            <person name="Zhao W."/>
            <person name="Sun Y."/>
            <person name="Zhang Z."/>
            <person name="Bao J."/>
            <person name="Han Y."/>
            <person name="Dong L."/>
            <person name="Ji J."/>
            <person name="Chen P."/>
            <person name="Wu S."/>
            <person name="Liu J."/>
            <person name="Xiao Y."/>
            <person name="Bu D."/>
            <person name="Tan J."/>
            <person name="Yang L."/>
            <person name="Ye C."/>
            <person name="Zhang J."/>
            <person name="Xu J."/>
            <person name="Zhou Y."/>
            <person name="Yu Y."/>
            <person name="Zhang B."/>
            <person name="Zhuang S."/>
            <person name="Wei H."/>
            <person name="Liu B."/>
            <person name="Lei M."/>
            <person name="Yu H."/>
            <person name="Li Y."/>
            <person name="Xu H."/>
            <person name="Wei S."/>
            <person name="He X."/>
            <person name="Fang L."/>
            <person name="Zhang Z."/>
            <person name="Zhang Y."/>
            <person name="Huang X."/>
            <person name="Su Z."/>
            <person name="Tong W."/>
            <person name="Li J."/>
            <person name="Tong Z."/>
            <person name="Li S."/>
            <person name="Ye J."/>
            <person name="Wang L."/>
            <person name="Fang L."/>
            <person name="Lei T."/>
            <person name="Chen C.-S."/>
            <person name="Chen H.-C."/>
            <person name="Xu Z."/>
            <person name="Li H."/>
            <person name="Huang H."/>
            <person name="Zhang F."/>
            <person name="Xu H."/>
            <person name="Li N."/>
            <person name="Zhao C."/>
            <person name="Li S."/>
            <person name="Dong L."/>
            <person name="Huang Y."/>
            <person name="Li L."/>
            <person name="Xi Y."/>
            <person name="Qi Q."/>
            <person name="Li W."/>
            <person name="Zhang B."/>
            <person name="Hu W."/>
            <person name="Zhang Y."/>
            <person name="Tian X."/>
            <person name="Jiao Y."/>
            <person name="Liang X."/>
            <person name="Jin J."/>
            <person name="Gao L."/>
            <person name="Zheng W."/>
            <person name="Hao B."/>
            <person name="Liu S.-M."/>
            <person name="Wang W."/>
            <person name="Yuan L."/>
            <person name="Cao M."/>
            <person name="McDermott J."/>
            <person name="Samudrala R."/>
            <person name="Wang J."/>
            <person name="Wong G.K.-S."/>
            <person name="Yang H."/>
        </authorList>
    </citation>
    <scope>NUCLEOTIDE SEQUENCE [LARGE SCALE GENOMIC DNA]</scope>
    <source>
        <strain>cv. Nipponbare</strain>
    </source>
</reference>
<reference key="7">
    <citation type="journal article" date="2003" name="Science">
        <title>Collection, mapping, and annotation of over 28,000 cDNA clones from japonica rice.</title>
        <authorList>
            <consortium name="The rice full-length cDNA consortium"/>
        </authorList>
    </citation>
    <scope>NUCLEOTIDE SEQUENCE [LARGE SCALE MRNA]</scope>
    <source>
        <strain>cv. Nipponbare</strain>
    </source>
</reference>
<reference key="8">
    <citation type="journal article" date="2006" name="Proteomics">
        <title>Proteomic analysis of rice leaf, stem and root tissues during growth course.</title>
        <authorList>
            <person name="Nozu Y."/>
            <person name="Tsugita A."/>
            <person name="Kamijo K."/>
        </authorList>
    </citation>
    <scope>PROTEIN SEQUENCE [LARGE SCALE ANALYSIS] OF 1-7</scope>
    <scope>IDENTIFICATION BY MASS SPECTROMETRY</scope>
    <source>
        <strain>cv. Nipponbare</strain>
    </source>
</reference>
<reference key="9">
    <citation type="journal article" date="2003" name="Plant Cell Physiol.">
        <title>Expression analyses of beta-tubulin isotype genes in rice.</title>
        <authorList>
            <person name="Yoshikawa M."/>
            <person name="Yang G."/>
            <person name="Kawaguchi K."/>
            <person name="Komatsu S."/>
        </authorList>
    </citation>
    <scope>TISSUE SPECIFICITY</scope>
    <scope>INDUCTION</scope>
    <scope>NOMENCLATURE</scope>
</reference>